<sequence length="123" mass="13799">MATINQLVRKPRKRMVDKSDVPALQNCPQRRGVCTRVYTTTPKKPNSALRKVCRVRLTNGFEVSSYIGGEGHNLQEHSVVLIRGGRVKDLPGVRYHTVRGSLDTSGVKDRKQGRSKYGAKRPK</sequence>
<proteinExistence type="evidence at protein level"/>
<keyword id="KW-0002">3D-structure</keyword>
<keyword id="KW-0488">Methylation</keyword>
<keyword id="KW-1185">Reference proteome</keyword>
<keyword id="KW-0687">Ribonucleoprotein</keyword>
<keyword id="KW-0689">Ribosomal protein</keyword>
<keyword id="KW-0694">RNA-binding</keyword>
<keyword id="KW-0699">rRNA-binding</keyword>
<keyword id="KW-0820">tRNA-binding</keyword>
<comment type="function">
    <text evidence="2">With S4 and S5 plays an important role in translational accuracy.</text>
</comment>
<comment type="function">
    <text evidence="2">Interacts with and stabilizes bases of the 16S rRNA that are involved in tRNA selection in the A site and with the mRNA backbone. Located at the interface of the 30S and 50S subunits, it traverses the body of the 30S subunit contacting proteins on the other side and probably holding the rRNA structure together. The combined cluster of proteins S8, S12 and S17 appears to hold together the shoulder and platform of the 30S subunit.</text>
</comment>
<comment type="subunit">
    <text evidence="2">Part of the 30S ribosomal subunit. Contacts proteins S8 and S17. May interact with IF1 in the 30S initiation complex.</text>
</comment>
<comment type="similarity">
    <text evidence="2">Belongs to the universal ribosomal protein uS12 family.</text>
</comment>
<gene>
    <name evidence="2" type="primary">rpsL</name>
    <name type="ordered locus">PA4268</name>
</gene>
<dbReference type="EMBL" id="AE004091">
    <property type="protein sequence ID" value="AAG07656.1"/>
    <property type="molecule type" value="Genomic_DNA"/>
</dbReference>
<dbReference type="PIR" id="F83112">
    <property type="entry name" value="F83112"/>
</dbReference>
<dbReference type="RefSeq" id="NP_252958.1">
    <property type="nucleotide sequence ID" value="NC_002516.2"/>
</dbReference>
<dbReference type="RefSeq" id="WP_003093744.1">
    <property type="nucleotide sequence ID" value="NZ_QZGE01000028.1"/>
</dbReference>
<dbReference type="PDB" id="7UNR">
    <property type="method" value="EM"/>
    <property type="resolution" value="2.90 A"/>
    <property type="chains" value="l=1-123"/>
</dbReference>
<dbReference type="PDB" id="7UNU">
    <property type="method" value="EM"/>
    <property type="resolution" value="2.90 A"/>
    <property type="chains" value="l=1-123"/>
</dbReference>
<dbReference type="PDB" id="7UNV">
    <property type="method" value="EM"/>
    <property type="resolution" value="2.70 A"/>
    <property type="chains" value="l=1-123"/>
</dbReference>
<dbReference type="PDB" id="7UNW">
    <property type="method" value="EM"/>
    <property type="resolution" value="2.60 A"/>
    <property type="chains" value="l=1-123"/>
</dbReference>
<dbReference type="PDB" id="8CD1">
    <property type="method" value="EM"/>
    <property type="resolution" value="3.00 A"/>
    <property type="chains" value="l=1-123"/>
</dbReference>
<dbReference type="PDB" id="8RWG">
    <property type="method" value="EM"/>
    <property type="resolution" value="2.46 A"/>
    <property type="chains" value="k=1-123"/>
</dbReference>
<dbReference type="PDBsum" id="7UNR"/>
<dbReference type="PDBsum" id="7UNU"/>
<dbReference type="PDBsum" id="7UNV"/>
<dbReference type="PDBsum" id="7UNW"/>
<dbReference type="PDBsum" id="8CD1"/>
<dbReference type="PDBsum" id="8RWG"/>
<dbReference type="EMDB" id="EMD-16566"/>
<dbReference type="EMDB" id="EMD-19547"/>
<dbReference type="EMDB" id="EMD-26630"/>
<dbReference type="EMDB" id="EMD-26633"/>
<dbReference type="EMDB" id="EMD-26634"/>
<dbReference type="EMDB" id="EMD-26635"/>
<dbReference type="SMR" id="Q9HWD0"/>
<dbReference type="FunCoup" id="Q9HWD0">
    <property type="interactions" value="721"/>
</dbReference>
<dbReference type="STRING" id="208964.PA4268"/>
<dbReference type="PaxDb" id="208964-PA4268"/>
<dbReference type="DNASU" id="881709"/>
<dbReference type="GeneID" id="77219193"/>
<dbReference type="GeneID" id="881709"/>
<dbReference type="KEGG" id="pae:PA4268"/>
<dbReference type="PATRIC" id="fig|208964.12.peg.4469"/>
<dbReference type="PseudoCAP" id="PA4268"/>
<dbReference type="HOGENOM" id="CLU_104295_1_2_6"/>
<dbReference type="InParanoid" id="Q9HWD0"/>
<dbReference type="OrthoDB" id="9802366at2"/>
<dbReference type="PhylomeDB" id="Q9HWD0"/>
<dbReference type="BioCyc" id="PAER208964:G1FZ6-4341-MONOMER"/>
<dbReference type="PRO" id="PR:Q9HWD0"/>
<dbReference type="Proteomes" id="UP000002438">
    <property type="component" value="Chromosome"/>
</dbReference>
<dbReference type="GO" id="GO:0005840">
    <property type="term" value="C:ribosome"/>
    <property type="evidence" value="ECO:0000318"/>
    <property type="project" value="GO_Central"/>
</dbReference>
<dbReference type="GO" id="GO:0015935">
    <property type="term" value="C:small ribosomal subunit"/>
    <property type="evidence" value="ECO:0007669"/>
    <property type="project" value="InterPro"/>
</dbReference>
<dbReference type="GO" id="GO:0019843">
    <property type="term" value="F:rRNA binding"/>
    <property type="evidence" value="ECO:0007669"/>
    <property type="project" value="UniProtKB-UniRule"/>
</dbReference>
<dbReference type="GO" id="GO:0003735">
    <property type="term" value="F:structural constituent of ribosome"/>
    <property type="evidence" value="ECO:0000318"/>
    <property type="project" value="GO_Central"/>
</dbReference>
<dbReference type="GO" id="GO:0000049">
    <property type="term" value="F:tRNA binding"/>
    <property type="evidence" value="ECO:0007669"/>
    <property type="project" value="UniProtKB-UniRule"/>
</dbReference>
<dbReference type="GO" id="GO:0006412">
    <property type="term" value="P:translation"/>
    <property type="evidence" value="ECO:0000318"/>
    <property type="project" value="GO_Central"/>
</dbReference>
<dbReference type="CDD" id="cd03368">
    <property type="entry name" value="Ribosomal_S12"/>
    <property type="match status" value="1"/>
</dbReference>
<dbReference type="FunFam" id="2.40.50.140:FF:000001">
    <property type="entry name" value="30S ribosomal protein S12"/>
    <property type="match status" value="1"/>
</dbReference>
<dbReference type="Gene3D" id="2.40.50.140">
    <property type="entry name" value="Nucleic acid-binding proteins"/>
    <property type="match status" value="1"/>
</dbReference>
<dbReference type="HAMAP" id="MF_00403_B">
    <property type="entry name" value="Ribosomal_uS12_B"/>
    <property type="match status" value="1"/>
</dbReference>
<dbReference type="InterPro" id="IPR012340">
    <property type="entry name" value="NA-bd_OB-fold"/>
</dbReference>
<dbReference type="InterPro" id="IPR006032">
    <property type="entry name" value="Ribosomal_uS12"/>
</dbReference>
<dbReference type="InterPro" id="IPR005679">
    <property type="entry name" value="Ribosomal_uS12_bac"/>
</dbReference>
<dbReference type="NCBIfam" id="TIGR00981">
    <property type="entry name" value="rpsL_bact"/>
    <property type="match status" value="1"/>
</dbReference>
<dbReference type="PANTHER" id="PTHR11652">
    <property type="entry name" value="30S RIBOSOMAL PROTEIN S12 FAMILY MEMBER"/>
    <property type="match status" value="1"/>
</dbReference>
<dbReference type="Pfam" id="PF00164">
    <property type="entry name" value="Ribosom_S12_S23"/>
    <property type="match status" value="1"/>
</dbReference>
<dbReference type="PIRSF" id="PIRSF002133">
    <property type="entry name" value="Ribosomal_S12/S23"/>
    <property type="match status" value="1"/>
</dbReference>
<dbReference type="PRINTS" id="PR01034">
    <property type="entry name" value="RIBOSOMALS12"/>
</dbReference>
<dbReference type="SUPFAM" id="SSF50249">
    <property type="entry name" value="Nucleic acid-binding proteins"/>
    <property type="match status" value="1"/>
</dbReference>
<dbReference type="PROSITE" id="PS00055">
    <property type="entry name" value="RIBOSOMAL_S12"/>
    <property type="match status" value="1"/>
</dbReference>
<reference key="1">
    <citation type="journal article" date="2000" name="Nature">
        <title>Complete genome sequence of Pseudomonas aeruginosa PAO1, an opportunistic pathogen.</title>
        <authorList>
            <person name="Stover C.K."/>
            <person name="Pham X.-Q.T."/>
            <person name="Erwin A.L."/>
            <person name="Mizoguchi S.D."/>
            <person name="Warrener P."/>
            <person name="Hickey M.J."/>
            <person name="Brinkman F.S.L."/>
            <person name="Hufnagle W.O."/>
            <person name="Kowalik D.J."/>
            <person name="Lagrou M."/>
            <person name="Garber R.L."/>
            <person name="Goltry L."/>
            <person name="Tolentino E."/>
            <person name="Westbrock-Wadman S."/>
            <person name="Yuan Y."/>
            <person name="Brody L.L."/>
            <person name="Coulter S.N."/>
            <person name="Folger K.R."/>
            <person name="Kas A."/>
            <person name="Larbig K."/>
            <person name="Lim R.M."/>
            <person name="Smith K.A."/>
            <person name="Spencer D.H."/>
            <person name="Wong G.K.-S."/>
            <person name="Wu Z."/>
            <person name="Paulsen I.T."/>
            <person name="Reizer J."/>
            <person name="Saier M.H. Jr."/>
            <person name="Hancock R.E.W."/>
            <person name="Lory S."/>
            <person name="Olson M.V."/>
        </authorList>
    </citation>
    <scope>NUCLEOTIDE SEQUENCE [LARGE SCALE GENOMIC DNA]</scope>
    <source>
        <strain>ATCC 15692 / DSM 22644 / CIP 104116 / JCM 14847 / LMG 12228 / 1C / PRS 101 / PAO1</strain>
    </source>
</reference>
<organism>
    <name type="scientific">Pseudomonas aeruginosa (strain ATCC 15692 / DSM 22644 / CIP 104116 / JCM 14847 / LMG 12228 / 1C / PRS 101 / PAO1)</name>
    <dbReference type="NCBI Taxonomy" id="208964"/>
    <lineage>
        <taxon>Bacteria</taxon>
        <taxon>Pseudomonadati</taxon>
        <taxon>Pseudomonadota</taxon>
        <taxon>Gammaproteobacteria</taxon>
        <taxon>Pseudomonadales</taxon>
        <taxon>Pseudomonadaceae</taxon>
        <taxon>Pseudomonas</taxon>
    </lineage>
</organism>
<evidence type="ECO:0000250" key="1"/>
<evidence type="ECO:0000255" key="2">
    <source>
        <dbReference type="HAMAP-Rule" id="MF_00403"/>
    </source>
</evidence>
<evidence type="ECO:0000256" key="3">
    <source>
        <dbReference type="SAM" id="MobiDB-lite"/>
    </source>
</evidence>
<evidence type="ECO:0000305" key="4"/>
<protein>
    <recommendedName>
        <fullName evidence="2">Small ribosomal subunit protein uS12</fullName>
    </recommendedName>
    <alternativeName>
        <fullName evidence="4">30S ribosomal protein S12</fullName>
    </alternativeName>
</protein>
<accession>Q9HWD0</accession>
<feature type="chain" id="PRO_0000146290" description="Small ribosomal subunit protein uS12">
    <location>
        <begin position="1"/>
        <end position="123"/>
    </location>
</feature>
<feature type="region of interest" description="Disordered" evidence="3">
    <location>
        <begin position="100"/>
        <end position="123"/>
    </location>
</feature>
<feature type="compositionally biased region" description="Basic residues" evidence="3">
    <location>
        <begin position="113"/>
        <end position="123"/>
    </location>
</feature>
<feature type="modified residue" description="3-methylthioaspartic acid" evidence="1">
    <location>
        <position position="89"/>
    </location>
</feature>
<name>RS12_PSEAE</name>